<name>MRAY_BORT9</name>
<protein>
    <recommendedName>
        <fullName evidence="1">Phospho-N-acetylmuramoyl-pentapeptide-transferase</fullName>
        <ecNumber evidence="1">2.7.8.13</ecNumber>
    </recommendedName>
    <alternativeName>
        <fullName evidence="1">UDP-MurNAc-pentapeptide phosphotransferase</fullName>
    </alternativeName>
</protein>
<sequence length="351" mass="39608">MFCLLGLRLLKYITFRTAYATIFAFLLALIFGPFIILRLKKLKLDQILRKDGPKRHLSEKIGIPTMGGILIFFCVLVSLFFWIDFWNIYFLIILFVMVSFACLGFMDDLLKIKRKNSDGLNPRFKIYGQILFSCISVTMLYYFGDEHVSIIYFPFFKSLKLDLGVLYIPFGMFILISASNSFNLTDGLDGLAIGLSIVVTGALVIIAYLASRVDFAFYLNIPNIKGAEELVVFLGALLGGSFGFLWFNAYPAKIMMGDTGSLSIGAVLGMTALILKSEILFAILAGVFVVETLSVIIQVVVYKHTKKRVFKMAPLHHHFEELGWSEMQVVIRFWIIGLIFAIIALSTLKIR</sequence>
<gene>
    <name evidence="1" type="primary">mraY</name>
    <name type="ordered locus">BT0303</name>
</gene>
<evidence type="ECO:0000255" key="1">
    <source>
        <dbReference type="HAMAP-Rule" id="MF_00038"/>
    </source>
</evidence>
<reference key="1">
    <citation type="submission" date="2004-12" db="EMBL/GenBank/DDBJ databases">
        <title>The genome sequence of Borrelia hermsii and Borrelia turicatae: comparative analysis of two agents of endemic N. America relapsing fever.</title>
        <authorList>
            <person name="Porcella S.F."/>
            <person name="Raffel S.J."/>
            <person name="Schrumpf M.E."/>
            <person name="Montgomery B."/>
            <person name="Smith T."/>
            <person name="Schwan T.G."/>
        </authorList>
    </citation>
    <scope>NUCLEOTIDE SEQUENCE [LARGE SCALE GENOMIC DNA]</scope>
    <source>
        <strain>91E135</strain>
    </source>
</reference>
<keyword id="KW-0131">Cell cycle</keyword>
<keyword id="KW-0132">Cell division</keyword>
<keyword id="KW-0997">Cell inner membrane</keyword>
<keyword id="KW-1003">Cell membrane</keyword>
<keyword id="KW-0133">Cell shape</keyword>
<keyword id="KW-0961">Cell wall biogenesis/degradation</keyword>
<keyword id="KW-0460">Magnesium</keyword>
<keyword id="KW-0472">Membrane</keyword>
<keyword id="KW-0479">Metal-binding</keyword>
<keyword id="KW-0573">Peptidoglycan synthesis</keyword>
<keyword id="KW-1185">Reference proteome</keyword>
<keyword id="KW-0808">Transferase</keyword>
<keyword id="KW-0812">Transmembrane</keyword>
<keyword id="KW-1133">Transmembrane helix</keyword>
<organism>
    <name type="scientific">Borrelia turicatae (strain 91E135)</name>
    <dbReference type="NCBI Taxonomy" id="314724"/>
    <lineage>
        <taxon>Bacteria</taxon>
        <taxon>Pseudomonadati</taxon>
        <taxon>Spirochaetota</taxon>
        <taxon>Spirochaetia</taxon>
        <taxon>Spirochaetales</taxon>
        <taxon>Borreliaceae</taxon>
        <taxon>Borrelia</taxon>
    </lineage>
</organism>
<accession>A1QZ99</accession>
<dbReference type="EC" id="2.7.8.13" evidence="1"/>
<dbReference type="EMBL" id="CP000049">
    <property type="protein sequence ID" value="AAX17641.1"/>
    <property type="molecule type" value="Genomic_DNA"/>
</dbReference>
<dbReference type="RefSeq" id="WP_011772260.1">
    <property type="nucleotide sequence ID" value="NZ_CP073176.1"/>
</dbReference>
<dbReference type="SMR" id="A1QZ99"/>
<dbReference type="KEGG" id="btu:BT0303"/>
<dbReference type="eggNOG" id="COG0472">
    <property type="taxonomic scope" value="Bacteria"/>
</dbReference>
<dbReference type="HOGENOM" id="CLU_023982_0_0_12"/>
<dbReference type="UniPathway" id="UPA00219"/>
<dbReference type="Proteomes" id="UP000001205">
    <property type="component" value="Chromosome"/>
</dbReference>
<dbReference type="GO" id="GO:0005886">
    <property type="term" value="C:plasma membrane"/>
    <property type="evidence" value="ECO:0007669"/>
    <property type="project" value="UniProtKB-SubCell"/>
</dbReference>
<dbReference type="GO" id="GO:0046872">
    <property type="term" value="F:metal ion binding"/>
    <property type="evidence" value="ECO:0007669"/>
    <property type="project" value="UniProtKB-KW"/>
</dbReference>
<dbReference type="GO" id="GO:0008963">
    <property type="term" value="F:phospho-N-acetylmuramoyl-pentapeptide-transferase activity"/>
    <property type="evidence" value="ECO:0007669"/>
    <property type="project" value="UniProtKB-UniRule"/>
</dbReference>
<dbReference type="GO" id="GO:0051992">
    <property type="term" value="F:UDP-N-acetylmuramoyl-L-alanyl-D-glutamyl-meso-2,6-diaminopimelyl-D-alanyl-D-alanine:undecaprenyl-phosphate transferase activity"/>
    <property type="evidence" value="ECO:0007669"/>
    <property type="project" value="RHEA"/>
</dbReference>
<dbReference type="GO" id="GO:0051301">
    <property type="term" value="P:cell division"/>
    <property type="evidence" value="ECO:0007669"/>
    <property type="project" value="UniProtKB-KW"/>
</dbReference>
<dbReference type="GO" id="GO:0071555">
    <property type="term" value="P:cell wall organization"/>
    <property type="evidence" value="ECO:0007669"/>
    <property type="project" value="UniProtKB-KW"/>
</dbReference>
<dbReference type="GO" id="GO:0009252">
    <property type="term" value="P:peptidoglycan biosynthetic process"/>
    <property type="evidence" value="ECO:0007669"/>
    <property type="project" value="UniProtKB-UniRule"/>
</dbReference>
<dbReference type="GO" id="GO:0008360">
    <property type="term" value="P:regulation of cell shape"/>
    <property type="evidence" value="ECO:0007669"/>
    <property type="project" value="UniProtKB-KW"/>
</dbReference>
<dbReference type="CDD" id="cd06852">
    <property type="entry name" value="GT_MraY"/>
    <property type="match status" value="1"/>
</dbReference>
<dbReference type="HAMAP" id="MF_00038">
    <property type="entry name" value="MraY"/>
    <property type="match status" value="1"/>
</dbReference>
<dbReference type="InterPro" id="IPR000715">
    <property type="entry name" value="Glycosyl_transferase_4"/>
</dbReference>
<dbReference type="InterPro" id="IPR003524">
    <property type="entry name" value="PNAcMuramoyl-5peptid_Trfase"/>
</dbReference>
<dbReference type="InterPro" id="IPR018480">
    <property type="entry name" value="PNAcMuramoyl-5peptid_Trfase_CS"/>
</dbReference>
<dbReference type="NCBIfam" id="TIGR00445">
    <property type="entry name" value="mraY"/>
    <property type="match status" value="1"/>
</dbReference>
<dbReference type="PANTHER" id="PTHR22926">
    <property type="entry name" value="PHOSPHO-N-ACETYLMURAMOYL-PENTAPEPTIDE-TRANSFERASE"/>
    <property type="match status" value="1"/>
</dbReference>
<dbReference type="PANTHER" id="PTHR22926:SF5">
    <property type="entry name" value="PHOSPHO-N-ACETYLMURAMOYL-PENTAPEPTIDE-TRANSFERASE HOMOLOG"/>
    <property type="match status" value="1"/>
</dbReference>
<dbReference type="Pfam" id="PF00953">
    <property type="entry name" value="Glycos_transf_4"/>
    <property type="match status" value="1"/>
</dbReference>
<dbReference type="PROSITE" id="PS01347">
    <property type="entry name" value="MRAY_1"/>
    <property type="match status" value="1"/>
</dbReference>
<dbReference type="PROSITE" id="PS01348">
    <property type="entry name" value="MRAY_2"/>
    <property type="match status" value="1"/>
</dbReference>
<feature type="chain" id="PRO_1000117165" description="Phospho-N-acetylmuramoyl-pentapeptide-transferase">
    <location>
        <begin position="1"/>
        <end position="351"/>
    </location>
</feature>
<feature type="transmembrane region" description="Helical" evidence="1">
    <location>
        <begin position="17"/>
        <end position="37"/>
    </location>
</feature>
<feature type="transmembrane region" description="Helical" evidence="1">
    <location>
        <begin position="63"/>
        <end position="83"/>
    </location>
</feature>
<feature type="transmembrane region" description="Helical" evidence="1">
    <location>
        <begin position="85"/>
        <end position="105"/>
    </location>
</feature>
<feature type="transmembrane region" description="Helical" evidence="1">
    <location>
        <begin position="124"/>
        <end position="144"/>
    </location>
</feature>
<feature type="transmembrane region" description="Helical" evidence="1">
    <location>
        <begin position="158"/>
        <end position="178"/>
    </location>
</feature>
<feature type="transmembrane region" description="Helical" evidence="1">
    <location>
        <begin position="190"/>
        <end position="210"/>
    </location>
</feature>
<feature type="transmembrane region" description="Helical" evidence="1">
    <location>
        <begin position="230"/>
        <end position="250"/>
    </location>
</feature>
<feature type="transmembrane region" description="Helical" evidence="1">
    <location>
        <begin position="254"/>
        <end position="274"/>
    </location>
</feature>
<feature type="transmembrane region" description="Helical" evidence="1">
    <location>
        <begin position="279"/>
        <end position="299"/>
    </location>
</feature>
<feature type="transmembrane region" description="Helical" evidence="1">
    <location>
        <begin position="328"/>
        <end position="348"/>
    </location>
</feature>
<proteinExistence type="inferred from homology"/>
<comment type="function">
    <text evidence="1">Catalyzes the initial step of the lipid cycle reactions in the biosynthesis of the cell wall peptidoglycan: transfers peptidoglycan precursor phospho-MurNAc-pentapeptide from UDP-MurNAc-pentapeptide onto the lipid carrier undecaprenyl phosphate, yielding undecaprenyl-pyrophosphoryl-MurNAc-pentapeptide, known as lipid I.</text>
</comment>
<comment type="catalytic activity">
    <reaction evidence="1">
        <text>UDP-N-acetyl-alpha-D-muramoyl-L-alanyl-gamma-D-glutamyl-meso-2,6-diaminopimeloyl-D-alanyl-D-alanine + di-trans,octa-cis-undecaprenyl phosphate = di-trans,octa-cis-undecaprenyl diphospho-N-acetyl-alpha-D-muramoyl-L-alanyl-D-glutamyl-meso-2,6-diaminopimeloyl-D-alanyl-D-alanine + UMP</text>
        <dbReference type="Rhea" id="RHEA:28386"/>
        <dbReference type="ChEBI" id="CHEBI:57865"/>
        <dbReference type="ChEBI" id="CHEBI:60392"/>
        <dbReference type="ChEBI" id="CHEBI:61386"/>
        <dbReference type="ChEBI" id="CHEBI:61387"/>
        <dbReference type="EC" id="2.7.8.13"/>
    </reaction>
</comment>
<comment type="cofactor">
    <cofactor evidence="1">
        <name>Mg(2+)</name>
        <dbReference type="ChEBI" id="CHEBI:18420"/>
    </cofactor>
</comment>
<comment type="pathway">
    <text evidence="1">Cell wall biogenesis; peptidoglycan biosynthesis.</text>
</comment>
<comment type="subcellular location">
    <subcellularLocation>
        <location evidence="1">Cell inner membrane</location>
        <topology evidence="1">Multi-pass membrane protein</topology>
    </subcellularLocation>
</comment>
<comment type="similarity">
    <text evidence="1">Belongs to the glycosyltransferase 4 family. MraY subfamily.</text>
</comment>